<reference key="1">
    <citation type="submission" date="2004-01" db="EMBL/GenBank/DDBJ databases">
        <title>Gene expression in normal chinchilla middle ear mucosa.</title>
        <authorList>
            <person name="Erdos G."/>
            <person name="Hu F.Z."/>
            <person name="Donfack J."/>
            <person name="Ahmed A.I."/>
            <person name="Preston R.A."/>
            <person name="Hayes J.D."/>
            <person name="Post J.C."/>
            <person name="Ehrlich G.D."/>
        </authorList>
    </citation>
    <scope>NUCLEOTIDE SEQUENCE [LARGE SCALE MRNA]</scope>
    <source>
        <tissue>Middle ear mucosa</tissue>
    </source>
</reference>
<feature type="chain" id="PRO_0000104455" description="Large ribosomal subunit protein uL11">
    <location>
        <begin position="1"/>
        <end position="165"/>
    </location>
</feature>
<feature type="modified residue" description="Phosphoserine" evidence="1">
    <location>
        <position position="38"/>
    </location>
</feature>
<feature type="modified residue" description="N6-acetyllysine" evidence="1">
    <location>
        <position position="54"/>
    </location>
</feature>
<feature type="modified residue" description="Phosphoserine" evidence="1">
    <location>
        <position position="165"/>
    </location>
</feature>
<feature type="cross-link" description="Glycyl lysine isopeptide (Lys-Gly) (interchain with G-Cter in SUMO2)" evidence="1">
    <location>
        <position position="40"/>
    </location>
</feature>
<feature type="cross-link" description="Glycyl lysine isopeptide (Lys-Gly) (interchain with G-Cter in ubiquitin)" evidence="1">
    <location>
        <position position="48"/>
    </location>
</feature>
<feature type="cross-link" description="Glycyl lysine isopeptide (Lys-Gly) (interchain with G-Cter in ubiquitin)" evidence="1">
    <location>
        <position position="83"/>
    </location>
</feature>
<accession>Q6QMZ7</accession>
<sequence length="165" mass="17931">MPPKFDPNEIKVVYLRCTGGEVGATSALAPKIGPLGLSPKKVGDDIAKATGDWKGLRITVKLTIQNRQAQIEVVPSASALIIKALKEPPRDRKKQKNIKHSGNITFDEIVNIARQMRHRSLARELSGTIKEILGTAQSVGCNVDNRHPHDIIDDINNGVVECPAS</sequence>
<organism>
    <name type="scientific">Chinchilla lanigera</name>
    <name type="common">Long-tailed chinchilla</name>
    <name type="synonym">Chinchilla villidera</name>
    <dbReference type="NCBI Taxonomy" id="34839"/>
    <lineage>
        <taxon>Eukaryota</taxon>
        <taxon>Metazoa</taxon>
        <taxon>Chordata</taxon>
        <taxon>Craniata</taxon>
        <taxon>Vertebrata</taxon>
        <taxon>Euteleostomi</taxon>
        <taxon>Mammalia</taxon>
        <taxon>Eutheria</taxon>
        <taxon>Euarchontoglires</taxon>
        <taxon>Glires</taxon>
        <taxon>Rodentia</taxon>
        <taxon>Hystricomorpha</taxon>
        <taxon>Chinchillidae</taxon>
        <taxon>Chinchilla</taxon>
    </lineage>
</organism>
<protein>
    <recommendedName>
        <fullName evidence="2">Large ribosomal subunit protein uL11</fullName>
    </recommendedName>
    <alternativeName>
        <fullName>60S ribosomal protein L12</fullName>
    </alternativeName>
</protein>
<dbReference type="EMBL" id="AY533223">
    <property type="protein sequence ID" value="AAS59425.1"/>
    <property type="molecule type" value="mRNA"/>
</dbReference>
<dbReference type="RefSeq" id="NP_001269299.1">
    <property type="nucleotide sequence ID" value="NM_001282370.1"/>
</dbReference>
<dbReference type="SMR" id="Q6QMZ7"/>
<dbReference type="Ensembl" id="ENSCLAT00000016034.1">
    <property type="protein sequence ID" value="ENSCLAP00000015870.1"/>
    <property type="gene ID" value="ENSCLAG00000010912.1"/>
</dbReference>
<dbReference type="GeneID" id="102003134"/>
<dbReference type="CTD" id="6136"/>
<dbReference type="GeneTree" id="ENSGT00390000006922"/>
<dbReference type="OMA" id="QPPHDVI"/>
<dbReference type="OrthoDB" id="9550325at2759"/>
<dbReference type="Proteomes" id="UP000694398">
    <property type="component" value="Unassembled WGS sequence"/>
</dbReference>
<dbReference type="GO" id="GO:0022625">
    <property type="term" value="C:cytosolic large ribosomal subunit"/>
    <property type="evidence" value="ECO:0007669"/>
    <property type="project" value="TreeGrafter"/>
</dbReference>
<dbReference type="GO" id="GO:0070180">
    <property type="term" value="F:large ribosomal subunit rRNA binding"/>
    <property type="evidence" value="ECO:0007669"/>
    <property type="project" value="TreeGrafter"/>
</dbReference>
<dbReference type="GO" id="GO:0003735">
    <property type="term" value="F:structural constituent of ribosome"/>
    <property type="evidence" value="ECO:0007669"/>
    <property type="project" value="InterPro"/>
</dbReference>
<dbReference type="GO" id="GO:0006412">
    <property type="term" value="P:translation"/>
    <property type="evidence" value="ECO:0007669"/>
    <property type="project" value="InterPro"/>
</dbReference>
<dbReference type="CDD" id="cd00349">
    <property type="entry name" value="Ribosomal_L11"/>
    <property type="match status" value="1"/>
</dbReference>
<dbReference type="FunFam" id="1.10.10.250:FF:000002">
    <property type="entry name" value="60S ribosomal protein L12"/>
    <property type="match status" value="1"/>
</dbReference>
<dbReference type="FunFam" id="3.30.1550.10:FF:000002">
    <property type="entry name" value="60S ribosomal protein L12"/>
    <property type="match status" value="1"/>
</dbReference>
<dbReference type="Gene3D" id="1.10.10.250">
    <property type="entry name" value="Ribosomal protein L11, C-terminal domain"/>
    <property type="match status" value="1"/>
</dbReference>
<dbReference type="Gene3D" id="3.30.1550.10">
    <property type="entry name" value="Ribosomal protein L11/L12, N-terminal domain"/>
    <property type="match status" value="1"/>
</dbReference>
<dbReference type="HAMAP" id="MF_00736">
    <property type="entry name" value="Ribosomal_uL11"/>
    <property type="match status" value="1"/>
</dbReference>
<dbReference type="InterPro" id="IPR000911">
    <property type="entry name" value="Ribosomal_uL11"/>
</dbReference>
<dbReference type="InterPro" id="IPR020783">
    <property type="entry name" value="Ribosomal_uL11_C"/>
</dbReference>
<dbReference type="InterPro" id="IPR036769">
    <property type="entry name" value="Ribosomal_uL11_C_sf"/>
</dbReference>
<dbReference type="InterPro" id="IPR020785">
    <property type="entry name" value="Ribosomal_uL11_CS"/>
</dbReference>
<dbReference type="InterPro" id="IPR020784">
    <property type="entry name" value="Ribosomal_uL11_N"/>
</dbReference>
<dbReference type="InterPro" id="IPR036796">
    <property type="entry name" value="Ribosomal_uL11_N_sf"/>
</dbReference>
<dbReference type="PANTHER" id="PTHR11661">
    <property type="entry name" value="60S RIBOSOMAL PROTEIN L12"/>
    <property type="match status" value="1"/>
</dbReference>
<dbReference type="PANTHER" id="PTHR11661:SF2">
    <property type="entry name" value="LARGE RIBOSOMAL SUBUNIT PROTEIN UL11"/>
    <property type="match status" value="1"/>
</dbReference>
<dbReference type="Pfam" id="PF00298">
    <property type="entry name" value="Ribosomal_L11"/>
    <property type="match status" value="1"/>
</dbReference>
<dbReference type="Pfam" id="PF03946">
    <property type="entry name" value="Ribosomal_L11_N"/>
    <property type="match status" value="1"/>
</dbReference>
<dbReference type="SMART" id="SM00649">
    <property type="entry name" value="RL11"/>
    <property type="match status" value="1"/>
</dbReference>
<dbReference type="SUPFAM" id="SSF54747">
    <property type="entry name" value="Ribosomal L11/L12e N-terminal domain"/>
    <property type="match status" value="1"/>
</dbReference>
<dbReference type="SUPFAM" id="SSF46906">
    <property type="entry name" value="Ribosomal protein L11, C-terminal domain"/>
    <property type="match status" value="1"/>
</dbReference>
<dbReference type="PROSITE" id="PS00359">
    <property type="entry name" value="RIBOSOMAL_L11"/>
    <property type="match status" value="1"/>
</dbReference>
<evidence type="ECO:0000250" key="1">
    <source>
        <dbReference type="UniProtKB" id="P30050"/>
    </source>
</evidence>
<evidence type="ECO:0000305" key="2"/>
<keyword id="KW-0007">Acetylation</keyword>
<keyword id="KW-0963">Cytoplasm</keyword>
<keyword id="KW-1017">Isopeptide bond</keyword>
<keyword id="KW-0597">Phosphoprotein</keyword>
<keyword id="KW-1185">Reference proteome</keyword>
<keyword id="KW-0687">Ribonucleoprotein</keyword>
<keyword id="KW-0689">Ribosomal protein</keyword>
<keyword id="KW-0694">RNA-binding</keyword>
<keyword id="KW-0832">Ubl conjugation</keyword>
<comment type="function">
    <text evidence="1">Component of the large ribosomal subunit. The ribosome is a large ribonucleoprotein complex responsible for the synthesis of proteins in the cell. Binds directly to 26S ribosomal RNA.</text>
</comment>
<comment type="subunit">
    <text evidence="1">Component of the large ribosomal subunit. Mature ribosomes consist of a small (40S) and a large (60S) subunit. The 40S subunit contains about 33 different proteins and 1 molecule of RNA (18S). The 60S subunit contains about 49 different proteins and 3 molecules of RNA (28S, 5.8S and 5S).</text>
</comment>
<comment type="subcellular location">
    <subcellularLocation>
        <location evidence="1">Cytoplasm</location>
    </subcellularLocation>
</comment>
<comment type="PTM">
    <text evidence="1">Ubiquitinated at Lys-48 and Lys-83 by RNF14 and RNF25 in response to ribosome collisions (ribosome stalling).</text>
</comment>
<comment type="similarity">
    <text evidence="2">Belongs to the universal ribosomal protein uL11 family.</text>
</comment>
<name>RL12_CHILA</name>
<gene>
    <name type="primary">RPL12</name>
</gene>
<proteinExistence type="evidence at transcript level"/>